<keyword id="KW-0002">3D-structure</keyword>
<keyword id="KW-0378">Hydrolase</keyword>
<keyword id="KW-1185">Reference proteome</keyword>
<name>DGT1A_VIBCH</name>
<dbReference type="EMBL" id="AE003852">
    <property type="protein sequence ID" value="AAF95127.1"/>
    <property type="molecule type" value="Genomic_DNA"/>
</dbReference>
<dbReference type="PIR" id="B82132">
    <property type="entry name" value="B82132"/>
</dbReference>
<dbReference type="RefSeq" id="NP_231613.1">
    <property type="nucleotide sequence ID" value="NC_002505.1"/>
</dbReference>
<dbReference type="RefSeq" id="WP_001198176.1">
    <property type="nucleotide sequence ID" value="NZ_LT906614.1"/>
</dbReference>
<dbReference type="PDB" id="7LWZ">
    <property type="method" value="X-ray"/>
    <property type="resolution" value="2.32 A"/>
    <property type="chains" value="A/B/C/D/E/F=2-441"/>
</dbReference>
<dbReference type="PDBsum" id="7LWZ"/>
<dbReference type="SMR" id="Q9KQL9"/>
<dbReference type="STRING" id="243277.VC_1979"/>
<dbReference type="DNASU" id="2613483"/>
<dbReference type="EnsemblBacteria" id="AAF95127">
    <property type="protein sequence ID" value="AAF95127"/>
    <property type="gene ID" value="VC_1979"/>
</dbReference>
<dbReference type="KEGG" id="vch:VC_1979"/>
<dbReference type="PATRIC" id="fig|243277.26.peg.1891"/>
<dbReference type="eggNOG" id="COG0232">
    <property type="taxonomic scope" value="Bacteria"/>
</dbReference>
<dbReference type="HOGENOM" id="CLU_028163_0_0_6"/>
<dbReference type="Proteomes" id="UP000000584">
    <property type="component" value="Chromosome 1"/>
</dbReference>
<dbReference type="GO" id="GO:0008832">
    <property type="term" value="F:dGTPase activity"/>
    <property type="evidence" value="ECO:0000318"/>
    <property type="project" value="GO_Central"/>
</dbReference>
<dbReference type="GO" id="GO:0006203">
    <property type="term" value="P:dGTP catabolic process"/>
    <property type="evidence" value="ECO:0000318"/>
    <property type="project" value="GO_Central"/>
</dbReference>
<dbReference type="CDD" id="cd00077">
    <property type="entry name" value="HDc"/>
    <property type="match status" value="1"/>
</dbReference>
<dbReference type="Gene3D" id="1.10.3210.10">
    <property type="entry name" value="Hypothetical protein af1432"/>
    <property type="match status" value="1"/>
</dbReference>
<dbReference type="HAMAP" id="MF_01212">
    <property type="entry name" value="dGTPase_type2"/>
    <property type="match status" value="1"/>
</dbReference>
<dbReference type="InterPro" id="IPR006261">
    <property type="entry name" value="dGTPase"/>
</dbReference>
<dbReference type="InterPro" id="IPR050135">
    <property type="entry name" value="dGTPase-like"/>
</dbReference>
<dbReference type="InterPro" id="IPR023023">
    <property type="entry name" value="dNTPase_2"/>
</dbReference>
<dbReference type="InterPro" id="IPR003607">
    <property type="entry name" value="HD/PDEase_dom"/>
</dbReference>
<dbReference type="InterPro" id="IPR006674">
    <property type="entry name" value="HD_domain"/>
</dbReference>
<dbReference type="InterPro" id="IPR026875">
    <property type="entry name" value="PHydrolase_assoc_dom"/>
</dbReference>
<dbReference type="NCBIfam" id="NF041026">
    <property type="entry name" value="antiphage_dGTPase"/>
    <property type="match status" value="1"/>
</dbReference>
<dbReference type="NCBIfam" id="TIGR01353">
    <property type="entry name" value="dGTP_triPase"/>
    <property type="match status" value="1"/>
</dbReference>
<dbReference type="NCBIfam" id="NF003701">
    <property type="entry name" value="PRK05318.1"/>
    <property type="match status" value="1"/>
</dbReference>
<dbReference type="PANTHER" id="PTHR11373:SF40">
    <property type="entry name" value="DEOXYGUANOSINETRIPHOSPHATE TRIPHOSPHOHYDROLASE-LIKE PROTEIN 2"/>
    <property type="match status" value="1"/>
</dbReference>
<dbReference type="PANTHER" id="PTHR11373">
    <property type="entry name" value="DEOXYNUCLEOSIDE TRIPHOSPHATE TRIPHOSPHOHYDROLASE"/>
    <property type="match status" value="1"/>
</dbReference>
<dbReference type="Pfam" id="PF13286">
    <property type="entry name" value="HD_assoc"/>
    <property type="match status" value="1"/>
</dbReference>
<dbReference type="SMART" id="SM00471">
    <property type="entry name" value="HDc"/>
    <property type="match status" value="1"/>
</dbReference>
<dbReference type="SUPFAM" id="SSF109604">
    <property type="entry name" value="HD-domain/PDEase-like"/>
    <property type="match status" value="1"/>
</dbReference>
<dbReference type="PROSITE" id="PS51831">
    <property type="entry name" value="HD"/>
    <property type="match status" value="1"/>
</dbReference>
<organism>
    <name type="scientific">Vibrio cholerae serotype O1 (strain ATCC 39315 / El Tor Inaba N16961)</name>
    <dbReference type="NCBI Taxonomy" id="243277"/>
    <lineage>
        <taxon>Bacteria</taxon>
        <taxon>Pseudomonadati</taxon>
        <taxon>Pseudomonadota</taxon>
        <taxon>Gammaproteobacteria</taxon>
        <taxon>Vibrionales</taxon>
        <taxon>Vibrionaceae</taxon>
        <taxon>Vibrio</taxon>
    </lineage>
</organism>
<evidence type="ECO:0000255" key="1">
    <source>
        <dbReference type="HAMAP-Rule" id="MF_01212"/>
    </source>
</evidence>
<evidence type="ECO:0000255" key="2">
    <source>
        <dbReference type="PROSITE-ProRule" id="PRU01175"/>
    </source>
</evidence>
<evidence type="ECO:0007829" key="3">
    <source>
        <dbReference type="PDB" id="7LWZ"/>
    </source>
</evidence>
<accession>Q9KQL9</accession>
<protein>
    <recommendedName>
        <fullName evidence="1">Deoxyguanosinetriphosphate triphosphohydrolase-like protein 1</fullName>
    </recommendedName>
</protein>
<proteinExistence type="evidence at protein level"/>
<comment type="similarity">
    <text evidence="1">Belongs to the dGTPase family. Type 2 subfamily.</text>
</comment>
<sequence>MQVSLNPEWLARNNDEHKIRRNDHRSPFQRDRARILHSAAFRRLQAKTQVHGTSLNDFHRTRLTHSLEAAQIGTGIVAQIKLKQPEFRELLPSDSLIDSLCLAHDIGHPPYGHGGEIALNYMMRDHGGFEGNAQTFRIVTSLEPYTEHHGMNLSRRTLLGLLKYPALLSATRAAIPPPAVAHQRQLKAKDWSPAKGIYDCDLASLDWVLEPLCESDRELLGQMRAEPSSPKEHRKTRFKSLDCSIMELADDIAYGVHDLEDAIVLGMVTRAQWQEAAAAQLAECGDPWFEEHIAELSEMLFSGKHYVRKDAIGGIVNALLTSISVKPVEAPFHNELLAFNAYIEPHMGNALEVLKHFVSQYVIQIPQVQRFEYKGQQLIMDLFEALSADPERLLPQATGEKWRKAQEQDEGMRVICDYIAAMTDAYAQRLHQQLFSAQSHY</sequence>
<reference key="1">
    <citation type="journal article" date="2000" name="Nature">
        <title>DNA sequence of both chromosomes of the cholera pathogen Vibrio cholerae.</title>
        <authorList>
            <person name="Heidelberg J.F."/>
            <person name="Eisen J.A."/>
            <person name="Nelson W.C."/>
            <person name="Clayton R.A."/>
            <person name="Gwinn M.L."/>
            <person name="Dodson R.J."/>
            <person name="Haft D.H."/>
            <person name="Hickey E.K."/>
            <person name="Peterson J.D."/>
            <person name="Umayam L.A."/>
            <person name="Gill S.R."/>
            <person name="Nelson K.E."/>
            <person name="Read T.D."/>
            <person name="Tettelin H."/>
            <person name="Richardson D.L."/>
            <person name="Ermolaeva M.D."/>
            <person name="Vamathevan J.J."/>
            <person name="Bass S."/>
            <person name="Qin H."/>
            <person name="Dragoi I."/>
            <person name="Sellers P."/>
            <person name="McDonald L.A."/>
            <person name="Utterback T.R."/>
            <person name="Fleischmann R.D."/>
            <person name="Nierman W.C."/>
            <person name="White O."/>
            <person name="Salzberg S.L."/>
            <person name="Smith H.O."/>
            <person name="Colwell R.R."/>
            <person name="Mekalanos J.J."/>
            <person name="Venter J.C."/>
            <person name="Fraser C.M."/>
        </authorList>
    </citation>
    <scope>NUCLEOTIDE SEQUENCE [LARGE SCALE GENOMIC DNA]</scope>
    <source>
        <strain>ATCC 39315 / El Tor Inaba N16961</strain>
    </source>
</reference>
<feature type="chain" id="PRO_0000205323" description="Deoxyguanosinetriphosphate triphosphohydrolase-like protein 1">
    <location>
        <begin position="1"/>
        <end position="441"/>
    </location>
</feature>
<feature type="domain" description="HD" evidence="2">
    <location>
        <begin position="62"/>
        <end position="255"/>
    </location>
</feature>
<feature type="helix" evidence="3">
    <location>
        <begin position="7"/>
        <end position="10"/>
    </location>
</feature>
<feature type="helix" evidence="3">
    <location>
        <begin position="27"/>
        <end position="36"/>
    </location>
</feature>
<feature type="helix" evidence="3">
    <location>
        <begin position="39"/>
        <end position="42"/>
    </location>
</feature>
<feature type="helix" evidence="3">
    <location>
        <begin position="43"/>
        <end position="45"/>
    </location>
</feature>
<feature type="helix" evidence="3">
    <location>
        <begin position="62"/>
        <end position="83"/>
    </location>
</feature>
<feature type="helix" evidence="3">
    <location>
        <begin position="85"/>
        <end position="87"/>
    </location>
</feature>
<feature type="turn" evidence="3">
    <location>
        <begin position="88"/>
        <end position="90"/>
    </location>
</feature>
<feature type="helix" evidence="3">
    <location>
        <begin position="94"/>
        <end position="103"/>
    </location>
</feature>
<feature type="turn" evidence="3">
    <location>
        <begin position="104"/>
        <end position="107"/>
    </location>
</feature>
<feature type="helix" evidence="3">
    <location>
        <begin position="112"/>
        <end position="122"/>
    </location>
</feature>
<feature type="turn" evidence="3">
    <location>
        <begin position="123"/>
        <end position="127"/>
    </location>
</feature>
<feature type="helix" evidence="3">
    <location>
        <begin position="131"/>
        <end position="140"/>
    </location>
</feature>
<feature type="strand" evidence="3">
    <location>
        <begin position="146"/>
        <end position="149"/>
    </location>
</feature>
<feature type="helix" evidence="3">
    <location>
        <begin position="155"/>
        <end position="161"/>
    </location>
</feature>
<feature type="helix" evidence="3">
    <location>
        <begin position="188"/>
        <end position="191"/>
    </location>
</feature>
<feature type="helix" evidence="3">
    <location>
        <begin position="199"/>
        <end position="201"/>
    </location>
</feature>
<feature type="helix" evidence="3">
    <location>
        <begin position="202"/>
        <end position="209"/>
    </location>
</feature>
<feature type="helix" evidence="3">
    <location>
        <begin position="214"/>
        <end position="220"/>
    </location>
</feature>
<feature type="helix" evidence="3">
    <location>
        <begin position="241"/>
        <end position="264"/>
    </location>
</feature>
<feature type="helix" evidence="3">
    <location>
        <begin position="270"/>
        <end position="282"/>
    </location>
</feature>
<feature type="helix" evidence="3">
    <location>
        <begin position="287"/>
        <end position="300"/>
    </location>
</feature>
<feature type="helix" evidence="3">
    <location>
        <begin position="305"/>
        <end position="320"/>
    </location>
</feature>
<feature type="strand" evidence="3">
    <location>
        <begin position="323"/>
        <end position="327"/>
    </location>
</feature>
<feature type="helix" evidence="3">
    <location>
        <begin position="335"/>
        <end position="338"/>
    </location>
</feature>
<feature type="strand" evidence="3">
    <location>
        <begin position="339"/>
        <end position="343"/>
    </location>
</feature>
<feature type="helix" evidence="3">
    <location>
        <begin position="345"/>
        <end position="362"/>
    </location>
</feature>
<feature type="helix" evidence="3">
    <location>
        <begin position="366"/>
        <end position="388"/>
    </location>
</feature>
<feature type="helix" evidence="3">
    <location>
        <begin position="390"/>
        <end position="393"/>
    </location>
</feature>
<feature type="helix" evidence="3">
    <location>
        <begin position="396"/>
        <end position="406"/>
    </location>
</feature>
<feature type="turn" evidence="3">
    <location>
        <begin position="407"/>
        <end position="409"/>
    </location>
</feature>
<feature type="helix" evidence="3">
    <location>
        <begin position="411"/>
        <end position="420"/>
    </location>
</feature>
<feature type="helix" evidence="3">
    <location>
        <begin position="424"/>
        <end position="435"/>
    </location>
</feature>
<gene>
    <name type="ordered locus">VC_1979</name>
</gene>